<dbReference type="EMBL" id="X75412">
    <property type="protein sequence ID" value="CAA53165.1"/>
    <property type="molecule type" value="mRNA"/>
</dbReference>
<dbReference type="PIR" id="S52631">
    <property type="entry name" value="S52631"/>
</dbReference>
<dbReference type="SMR" id="P55141"/>
<dbReference type="GO" id="GO:0009881">
    <property type="term" value="F:photoreceptor activity"/>
    <property type="evidence" value="ECO:0007669"/>
    <property type="project" value="UniProtKB-KW"/>
</dbReference>
<dbReference type="GO" id="GO:0042803">
    <property type="term" value="F:protein homodimerization activity"/>
    <property type="evidence" value="ECO:0007669"/>
    <property type="project" value="InterPro"/>
</dbReference>
<dbReference type="GO" id="GO:0009584">
    <property type="term" value="P:detection of visible light"/>
    <property type="evidence" value="ECO:0007669"/>
    <property type="project" value="InterPro"/>
</dbReference>
<dbReference type="GO" id="GO:0009585">
    <property type="term" value="P:red, far-red light phototransduction"/>
    <property type="evidence" value="ECO:0007669"/>
    <property type="project" value="InterPro"/>
</dbReference>
<dbReference type="GO" id="GO:0006355">
    <property type="term" value="P:regulation of DNA-templated transcription"/>
    <property type="evidence" value="ECO:0007669"/>
    <property type="project" value="InterPro"/>
</dbReference>
<dbReference type="CDD" id="cd16932">
    <property type="entry name" value="HATPase_Phy-like"/>
    <property type="match status" value="1"/>
</dbReference>
<dbReference type="CDD" id="cd00130">
    <property type="entry name" value="PAS"/>
    <property type="match status" value="2"/>
</dbReference>
<dbReference type="FunFam" id="3.30.450.270:FF:000001">
    <property type="entry name" value="Phytochrome"/>
    <property type="match status" value="1"/>
</dbReference>
<dbReference type="Gene3D" id="3.30.450.270">
    <property type="match status" value="1"/>
</dbReference>
<dbReference type="Gene3D" id="3.30.450.40">
    <property type="match status" value="1"/>
</dbReference>
<dbReference type="Gene3D" id="3.30.565.10">
    <property type="entry name" value="Histidine kinase-like ATPase, C-terminal domain"/>
    <property type="match status" value="1"/>
</dbReference>
<dbReference type="Gene3D" id="3.30.450.20">
    <property type="entry name" value="PAS domain"/>
    <property type="match status" value="3"/>
</dbReference>
<dbReference type="InterPro" id="IPR003018">
    <property type="entry name" value="GAF"/>
</dbReference>
<dbReference type="InterPro" id="IPR029016">
    <property type="entry name" value="GAF-like_dom_sf"/>
</dbReference>
<dbReference type="InterPro" id="IPR036890">
    <property type="entry name" value="HATPase_C_sf"/>
</dbReference>
<dbReference type="InterPro" id="IPR005467">
    <property type="entry name" value="His_kinase_dom"/>
</dbReference>
<dbReference type="InterPro" id="IPR000014">
    <property type="entry name" value="PAS"/>
</dbReference>
<dbReference type="InterPro" id="IPR035965">
    <property type="entry name" value="PAS-like_dom_sf"/>
</dbReference>
<dbReference type="InterPro" id="IPR013654">
    <property type="entry name" value="PAS_2"/>
</dbReference>
<dbReference type="InterPro" id="IPR013767">
    <property type="entry name" value="PAS_fold"/>
</dbReference>
<dbReference type="InterPro" id="IPR044767">
    <property type="entry name" value="Phy_HATPase-like"/>
</dbReference>
<dbReference type="InterPro" id="IPR016132">
    <property type="entry name" value="Phyto_chromo_attachment"/>
</dbReference>
<dbReference type="InterPro" id="IPR013516">
    <property type="entry name" value="Phyto_chromo_BS"/>
</dbReference>
<dbReference type="InterPro" id="IPR001294">
    <property type="entry name" value="Phytochrome"/>
</dbReference>
<dbReference type="InterPro" id="IPR012129">
    <property type="entry name" value="Phytochrome_A-E"/>
</dbReference>
<dbReference type="InterPro" id="IPR013515">
    <property type="entry name" value="Phytochrome_cen-reg"/>
</dbReference>
<dbReference type="InterPro" id="IPR043150">
    <property type="entry name" value="Phytochrome_PHY_sf"/>
</dbReference>
<dbReference type="NCBIfam" id="TIGR00229">
    <property type="entry name" value="sensory_box"/>
    <property type="match status" value="1"/>
</dbReference>
<dbReference type="PANTHER" id="PTHR47876">
    <property type="entry name" value="OS08G0260000 PROTEIN"/>
    <property type="match status" value="1"/>
</dbReference>
<dbReference type="PANTHER" id="PTHR47876:SF3">
    <property type="entry name" value="PHYTOCHROME 1"/>
    <property type="match status" value="1"/>
</dbReference>
<dbReference type="Pfam" id="PF01590">
    <property type="entry name" value="GAF"/>
    <property type="match status" value="1"/>
</dbReference>
<dbReference type="Pfam" id="PF02518">
    <property type="entry name" value="HATPase_c"/>
    <property type="match status" value="1"/>
</dbReference>
<dbReference type="Pfam" id="PF00989">
    <property type="entry name" value="PAS"/>
    <property type="match status" value="2"/>
</dbReference>
<dbReference type="Pfam" id="PF08446">
    <property type="entry name" value="PAS_2"/>
    <property type="match status" value="1"/>
</dbReference>
<dbReference type="Pfam" id="PF00360">
    <property type="entry name" value="PHY"/>
    <property type="match status" value="1"/>
</dbReference>
<dbReference type="PIRSF" id="PIRSF000084">
    <property type="entry name" value="Phytochrome"/>
    <property type="match status" value="1"/>
</dbReference>
<dbReference type="PRINTS" id="PR01033">
    <property type="entry name" value="PHYTOCHROME"/>
</dbReference>
<dbReference type="SMART" id="SM00065">
    <property type="entry name" value="GAF"/>
    <property type="match status" value="1"/>
</dbReference>
<dbReference type="SMART" id="SM00387">
    <property type="entry name" value="HATPase_c"/>
    <property type="match status" value="1"/>
</dbReference>
<dbReference type="SMART" id="SM00091">
    <property type="entry name" value="PAS"/>
    <property type="match status" value="2"/>
</dbReference>
<dbReference type="SUPFAM" id="SSF55874">
    <property type="entry name" value="ATPase domain of HSP90 chaperone/DNA topoisomerase II/histidine kinase"/>
    <property type="match status" value="1"/>
</dbReference>
<dbReference type="SUPFAM" id="SSF55781">
    <property type="entry name" value="GAF domain-like"/>
    <property type="match status" value="2"/>
</dbReference>
<dbReference type="SUPFAM" id="SSF55785">
    <property type="entry name" value="PYP-like sensor domain (PAS domain)"/>
    <property type="match status" value="3"/>
</dbReference>
<dbReference type="PROSITE" id="PS50109">
    <property type="entry name" value="HIS_KIN"/>
    <property type="match status" value="1"/>
</dbReference>
<dbReference type="PROSITE" id="PS50112">
    <property type="entry name" value="PAS"/>
    <property type="match status" value="2"/>
</dbReference>
<dbReference type="PROSITE" id="PS00245">
    <property type="entry name" value="PHYTOCHROME_1"/>
    <property type="match status" value="1"/>
</dbReference>
<dbReference type="PROSITE" id="PS50046">
    <property type="entry name" value="PHYTOCHROME_2"/>
    <property type="match status" value="1"/>
</dbReference>
<evidence type="ECO:0000250" key="1"/>
<evidence type="ECO:0000255" key="2">
    <source>
        <dbReference type="PROSITE-ProRule" id="PRU00107"/>
    </source>
</evidence>
<evidence type="ECO:0000255" key="3">
    <source>
        <dbReference type="PROSITE-ProRule" id="PRU00140"/>
    </source>
</evidence>
<evidence type="ECO:0000305" key="4"/>
<keyword id="KW-0157">Chromophore</keyword>
<keyword id="KW-0600">Photoreceptor protein</keyword>
<keyword id="KW-0675">Receptor</keyword>
<keyword id="KW-0677">Repeat</keyword>
<keyword id="KW-0716">Sensory transduction</keyword>
<keyword id="KW-0804">Transcription</keyword>
<keyword id="KW-0805">Transcription regulation</keyword>
<protein>
    <recommendedName>
        <fullName>Phytochrome A</fullName>
    </recommendedName>
</protein>
<name>PHYA_PETCR</name>
<gene>
    <name type="primary">PHYA</name>
</gene>
<accession>P55141</accession>
<feature type="chain" id="PRO_0000171981" description="Phytochrome A">
    <location>
        <begin position="1"/>
        <end position="1129"/>
    </location>
</feature>
<feature type="domain" description="GAF">
    <location>
        <begin position="217"/>
        <end position="399"/>
    </location>
</feature>
<feature type="domain" description="PAS 1" evidence="3">
    <location>
        <begin position="622"/>
        <end position="692"/>
    </location>
</feature>
<feature type="domain" description="PAS 2" evidence="3">
    <location>
        <begin position="755"/>
        <end position="826"/>
    </location>
</feature>
<feature type="domain" description="Histidine kinase" evidence="2">
    <location>
        <begin position="906"/>
        <end position="1123"/>
    </location>
</feature>
<feature type="binding site" description="covalent" evidence="1">
    <location>
        <position position="322"/>
    </location>
    <ligand>
        <name>phytochromobilin</name>
        <dbReference type="ChEBI" id="CHEBI:189064"/>
    </ligand>
</feature>
<comment type="function">
    <text>Regulatory photoreceptor which exists in two forms that are reversibly interconvertible by light: the Pr form that absorbs maximally in the red region of the spectrum and the Pfr form that absorbs maximally in the far-red region. Photoconversion of Pr to Pfr induces an array of morphogenic responses, whereas reconversion of Pfr to Pr cancels the induction of those responses. Pfr controls the expression of a number of nuclear genes including those encoding the small subunit of ribulose-bisphosphate carboxylase, chlorophyll A/B binding protein, protochlorophyllide reductase, rRNA, etc. It also controls the expression of its own gene(s) in a negative feedback fashion.</text>
</comment>
<comment type="subunit">
    <text>Homodimer.</text>
</comment>
<comment type="PTM">
    <text evidence="1">Contains one covalently linked phytochromobilin chromophore.</text>
</comment>
<comment type="similarity">
    <text evidence="4">Belongs to the phytochrome family.</text>
</comment>
<proteinExistence type="evidence at transcript level"/>
<organism>
    <name type="scientific">Petroselinum crispum</name>
    <name type="common">Parsley</name>
    <name type="synonym">Petroselinum hortense</name>
    <dbReference type="NCBI Taxonomy" id="4043"/>
    <lineage>
        <taxon>Eukaryota</taxon>
        <taxon>Viridiplantae</taxon>
        <taxon>Streptophyta</taxon>
        <taxon>Embryophyta</taxon>
        <taxon>Tracheophyta</taxon>
        <taxon>Spermatophyta</taxon>
        <taxon>Magnoliopsida</taxon>
        <taxon>eudicotyledons</taxon>
        <taxon>Gunneridae</taxon>
        <taxon>Pentapetalae</taxon>
        <taxon>asterids</taxon>
        <taxon>campanulids</taxon>
        <taxon>Apiales</taxon>
        <taxon>Apiaceae</taxon>
        <taxon>Apioideae</taxon>
        <taxon>apioid superclade</taxon>
        <taxon>Apieae</taxon>
        <taxon>Petroselinum</taxon>
    </lineage>
</organism>
<reference key="1">
    <citation type="journal article" date="1994" name="Plant Mol. Biol.">
        <title>Regulation of phytochrome A mRNA abundance in parsley seedlings and cell-suspension cultures.</title>
        <authorList>
            <person name="Poppe C."/>
            <person name="Ehmann B."/>
            <person name="Frohnmeyer H."/>
            <person name="Furuya M."/>
            <person name="Schaefer E."/>
        </authorList>
    </citation>
    <scope>NUCLEOTIDE SEQUENCE [MRNA]</scope>
    <source>
        <strain>cv. Hamburger Schnitt</strain>
    </source>
</reference>
<sequence length="1129" mass="124746">MSSSRPANSSSNPGRANQNARVVLTTLDAKIHADFEESGNSFDYSSSVRVTSAVGENSSIQSNKLTTAYLHHIQKGKLIQPVGCLLAVDEKSFKIMAYSENAPEMLTMVSHAVPSVGEHPVLGIGTDVRTIFTAPSAAALQKAVGFTDINLLNPILVHCKTSGKPFYAIAHRVTGSLIIDFEPVKPYEVPMTAAGALQSYKLASKAVNRLQALPGGSMERLCDTMVQEVFELTGYDRVMAYKFHDDDHGEVTAEVTKPGLEPYFGLHYPATDVPQAARFLFLKNKVRMICDCRANSAPVLQDEKLPFELTLCGSTLRAPHSCHLQYMENMNSIASLVMAVVINDSDEVVESSDRNSVKSKKLWGLVVCHNTSPRFVPFPLRYACEFLAQVFAIHVSKELELENQIVEKNILRTQTLLCDLLMRDAPLGIVSQSPNMMDLVKCDGAALLYKNKVYRLGATPSDYQLRDIVSWLTEYHTDSTGLSTDSLYDAGYPGALALGDVVCGMAVVKITSHDMLFWFRSHAAGHIRWGGAKAEPDENHDGRKMHPRSSFKAFLEVVKTRSTTWKEFEMDAIHSLQLILRKALSVEKAVAAQGDEIRSNTDVIHTKLNDLKIEGIQELEAVTSEMVRLIETATVPIFAVDADEIVNGWNTKIAELTGLPVDQAMGKHLLTLVEDSSVGTVVFLLALALQGKEEQGIPFEFKTYGSREDSVPITVVVNACATRGLHDNVVGVCFVAQDVTSQKTIMDKFTRIQGDYKAIVQNPNPLIPPIFGTDEFGWCSEWNQAMTELSGWRREDVMNKMLLGEIFGIQTSCCHLKSKEAFVNLGVVLNNALTGQISEKICFSFFATDGKYVECLLCASKKLHGEGTVTGIFCFLQLASQELQQALHIQRLTEQTAMKRLKTLSYLRRQAKNPLCGINFVREKLEEIGMGEEQTKLFRTSVHCQRHVNKILDDTDLDSIIDGYLDLEMSEFRLHDVYVASRSQVSMRSNGKAIQVVDNFSEEMMSETLYGDSLRLQKVLADFMSVCVNLTPVGGHLGISVTLTEDNLGQSVQLVHLEFRITHTGAGVPEEAVSQMFGSDSETSEEGISLLISRKLVKLMNGDVHYLREAGKSTFIITVELAAASKRES</sequence>